<protein>
    <recommendedName>
        <fullName evidence="1">Protein RecA</fullName>
    </recommendedName>
    <alternativeName>
        <fullName evidence="1">Recombinase A</fullName>
    </alternativeName>
</protein>
<reference key="1">
    <citation type="submission" date="2004-01" db="EMBL/GenBank/DDBJ databases">
        <title>Taxonomic re-evaluation of the genus Enterococcus.</title>
        <authorList>
            <person name="Torriani S."/>
            <person name="Felis G.E."/>
            <person name="Knijff E."/>
            <person name="Girelli D."/>
            <person name="Castioni A."/>
            <person name="Dellaglio F."/>
        </authorList>
    </citation>
    <scope>NUCLEOTIDE SEQUENCE [GENOMIC DNA]</scope>
    <source>
        <strain>ATCC 49573 / DSM 24841 / JCM 8728 / LMG 13129 / NBRC 100675 / NCIMB 702313 / NCDO 2313 / NCTC 11428 / F87/276</strain>
    </source>
</reference>
<accession>Q6KCK0</accession>
<gene>
    <name evidence="1" type="primary">recA</name>
</gene>
<name>RECA_ENTGA</name>
<comment type="function">
    <text evidence="1">Can catalyze the hydrolysis of ATP in the presence of single-stranded DNA, the ATP-dependent uptake of single-stranded DNA by duplex DNA, and the ATP-dependent hybridization of homologous single-stranded DNAs. It interacts with LexA causing its activation and leading to its autocatalytic cleavage.</text>
</comment>
<comment type="subcellular location">
    <subcellularLocation>
        <location evidence="1">Cytoplasm</location>
    </subcellularLocation>
</comment>
<comment type="similarity">
    <text evidence="1">Belongs to the RecA family.</text>
</comment>
<evidence type="ECO:0000255" key="1">
    <source>
        <dbReference type="HAMAP-Rule" id="MF_00268"/>
    </source>
</evidence>
<sequence>MADDRKAALDAALKKIEKNYGKGAIMKLGEKVDQQISTIPSGSLALDVALGVGGYPRGRIVEVYGPESSGKTTVALHAIAEVQKGGGTAAFIDAEHALDPQYAQKLGVNIDDLLLSQPDTGEQGLEIADALVSSGAVDIVVIDSVAALVPRAEIDGEMGDTHVGLQARLMSQALRKLSGSINKTKTIAIFINQIREKVGIMFGNPETTPGGRALKFYSTIRLEVRRAEQLKSGTDIIGNRTKIKVVKNKVAPPFKVAEVDMMYGQGISQEGELLDMAVEQDIVDKSGAWYAYKGDRIGQGRENAKNYMREHQEMMMEVSARVRDAYGIGTGETVIEIEDAQEELPLDE</sequence>
<dbReference type="EMBL" id="AJ621703">
    <property type="protein sequence ID" value="CAF21828.1"/>
    <property type="molecule type" value="Genomic_DNA"/>
</dbReference>
<dbReference type="RefSeq" id="WP_060813729.1">
    <property type="nucleotide sequence ID" value="NZ_UFYW01000001.1"/>
</dbReference>
<dbReference type="SMR" id="Q6KCK0"/>
<dbReference type="STRING" id="1353.AL523_05240"/>
<dbReference type="OrthoDB" id="9776733at2"/>
<dbReference type="GO" id="GO:0005829">
    <property type="term" value="C:cytosol"/>
    <property type="evidence" value="ECO:0007669"/>
    <property type="project" value="TreeGrafter"/>
</dbReference>
<dbReference type="GO" id="GO:0005524">
    <property type="term" value="F:ATP binding"/>
    <property type="evidence" value="ECO:0007669"/>
    <property type="project" value="UniProtKB-UniRule"/>
</dbReference>
<dbReference type="GO" id="GO:0016887">
    <property type="term" value="F:ATP hydrolysis activity"/>
    <property type="evidence" value="ECO:0007669"/>
    <property type="project" value="InterPro"/>
</dbReference>
<dbReference type="GO" id="GO:0140664">
    <property type="term" value="F:ATP-dependent DNA damage sensor activity"/>
    <property type="evidence" value="ECO:0007669"/>
    <property type="project" value="InterPro"/>
</dbReference>
<dbReference type="GO" id="GO:0003684">
    <property type="term" value="F:damaged DNA binding"/>
    <property type="evidence" value="ECO:0007669"/>
    <property type="project" value="UniProtKB-UniRule"/>
</dbReference>
<dbReference type="GO" id="GO:0003697">
    <property type="term" value="F:single-stranded DNA binding"/>
    <property type="evidence" value="ECO:0007669"/>
    <property type="project" value="UniProtKB-UniRule"/>
</dbReference>
<dbReference type="GO" id="GO:0006310">
    <property type="term" value="P:DNA recombination"/>
    <property type="evidence" value="ECO:0007669"/>
    <property type="project" value="UniProtKB-UniRule"/>
</dbReference>
<dbReference type="GO" id="GO:0006281">
    <property type="term" value="P:DNA repair"/>
    <property type="evidence" value="ECO:0007669"/>
    <property type="project" value="UniProtKB-UniRule"/>
</dbReference>
<dbReference type="GO" id="GO:0009432">
    <property type="term" value="P:SOS response"/>
    <property type="evidence" value="ECO:0007669"/>
    <property type="project" value="UniProtKB-UniRule"/>
</dbReference>
<dbReference type="CDD" id="cd00983">
    <property type="entry name" value="RecA"/>
    <property type="match status" value="1"/>
</dbReference>
<dbReference type="FunFam" id="3.40.50.300:FF:000087">
    <property type="entry name" value="Recombinase RecA"/>
    <property type="match status" value="1"/>
</dbReference>
<dbReference type="Gene3D" id="3.40.50.300">
    <property type="entry name" value="P-loop containing nucleotide triphosphate hydrolases"/>
    <property type="match status" value="1"/>
</dbReference>
<dbReference type="HAMAP" id="MF_00268">
    <property type="entry name" value="RecA"/>
    <property type="match status" value="1"/>
</dbReference>
<dbReference type="InterPro" id="IPR003593">
    <property type="entry name" value="AAA+_ATPase"/>
</dbReference>
<dbReference type="InterPro" id="IPR013765">
    <property type="entry name" value="DNA_recomb/repair_RecA"/>
</dbReference>
<dbReference type="InterPro" id="IPR020584">
    <property type="entry name" value="DNA_recomb/repair_RecA_CS"/>
</dbReference>
<dbReference type="InterPro" id="IPR027417">
    <property type="entry name" value="P-loop_NTPase"/>
</dbReference>
<dbReference type="InterPro" id="IPR049261">
    <property type="entry name" value="RecA-like_C"/>
</dbReference>
<dbReference type="InterPro" id="IPR049428">
    <property type="entry name" value="RecA-like_N"/>
</dbReference>
<dbReference type="InterPro" id="IPR020588">
    <property type="entry name" value="RecA_ATP-bd"/>
</dbReference>
<dbReference type="InterPro" id="IPR023400">
    <property type="entry name" value="RecA_C_sf"/>
</dbReference>
<dbReference type="InterPro" id="IPR020587">
    <property type="entry name" value="RecA_monomer-monomer_interface"/>
</dbReference>
<dbReference type="NCBIfam" id="TIGR02012">
    <property type="entry name" value="tigrfam_recA"/>
    <property type="match status" value="1"/>
</dbReference>
<dbReference type="PANTHER" id="PTHR45900:SF1">
    <property type="entry name" value="MITOCHONDRIAL DNA REPAIR PROTEIN RECA HOMOLOG-RELATED"/>
    <property type="match status" value="1"/>
</dbReference>
<dbReference type="PANTHER" id="PTHR45900">
    <property type="entry name" value="RECA"/>
    <property type="match status" value="1"/>
</dbReference>
<dbReference type="Pfam" id="PF00154">
    <property type="entry name" value="RecA"/>
    <property type="match status" value="1"/>
</dbReference>
<dbReference type="Pfam" id="PF21096">
    <property type="entry name" value="RecA_C"/>
    <property type="match status" value="1"/>
</dbReference>
<dbReference type="PRINTS" id="PR00142">
    <property type="entry name" value="RECA"/>
</dbReference>
<dbReference type="SMART" id="SM00382">
    <property type="entry name" value="AAA"/>
    <property type="match status" value="1"/>
</dbReference>
<dbReference type="SUPFAM" id="SSF52540">
    <property type="entry name" value="P-loop containing nucleoside triphosphate hydrolases"/>
    <property type="match status" value="1"/>
</dbReference>
<dbReference type="SUPFAM" id="SSF54752">
    <property type="entry name" value="RecA protein, C-terminal domain"/>
    <property type="match status" value="1"/>
</dbReference>
<dbReference type="PROSITE" id="PS00321">
    <property type="entry name" value="RECA_1"/>
    <property type="match status" value="1"/>
</dbReference>
<dbReference type="PROSITE" id="PS50162">
    <property type="entry name" value="RECA_2"/>
    <property type="match status" value="1"/>
</dbReference>
<dbReference type="PROSITE" id="PS50163">
    <property type="entry name" value="RECA_3"/>
    <property type="match status" value="1"/>
</dbReference>
<keyword id="KW-0067">ATP-binding</keyword>
<keyword id="KW-0963">Cytoplasm</keyword>
<keyword id="KW-0227">DNA damage</keyword>
<keyword id="KW-0233">DNA recombination</keyword>
<keyword id="KW-0234">DNA repair</keyword>
<keyword id="KW-0238">DNA-binding</keyword>
<keyword id="KW-0547">Nucleotide-binding</keyword>
<keyword id="KW-0742">SOS response</keyword>
<organism>
    <name type="scientific">Enterococcus gallinarum</name>
    <dbReference type="NCBI Taxonomy" id="1353"/>
    <lineage>
        <taxon>Bacteria</taxon>
        <taxon>Bacillati</taxon>
        <taxon>Bacillota</taxon>
        <taxon>Bacilli</taxon>
        <taxon>Lactobacillales</taxon>
        <taxon>Enterococcaceae</taxon>
        <taxon>Enterococcus</taxon>
    </lineage>
</organism>
<feature type="chain" id="PRO_0000122711" description="Protein RecA">
    <location>
        <begin position="1"/>
        <end position="348"/>
    </location>
</feature>
<feature type="binding site" evidence="1">
    <location>
        <begin position="65"/>
        <end position="72"/>
    </location>
    <ligand>
        <name>ATP</name>
        <dbReference type="ChEBI" id="CHEBI:30616"/>
    </ligand>
</feature>
<proteinExistence type="inferred from homology"/>